<keyword id="KW-0002">3D-structure</keyword>
<keyword id="KW-0903">Direct protein sequencing</keyword>
<keyword id="KW-0378">Hydrolase</keyword>
<keyword id="KW-0479">Metal-binding</keyword>
<keyword id="KW-0862">Zinc</keyword>
<name>HDAH_ALCSD</name>
<organism>
    <name type="scientific">Alcaligenes sp. (strain DSM 11172)</name>
    <name type="common">Bordetella sp. (strain FB188)</name>
    <dbReference type="NCBI Taxonomy" id="242601"/>
    <lineage>
        <taxon>Bacteria</taxon>
        <taxon>Pseudomonadati</taxon>
        <taxon>Pseudomonadota</taxon>
        <taxon>Betaproteobacteria</taxon>
        <taxon>Burkholderiales</taxon>
        <taxon>Alcaligenaceae</taxon>
    </lineage>
</organism>
<dbReference type="EC" id="3.5.1.-"/>
<dbReference type="EMBL" id="AJ580773">
    <property type="protein sequence ID" value="CAE45336.1"/>
    <property type="molecule type" value="Genomic_DNA"/>
</dbReference>
<dbReference type="PDB" id="1ZZ0">
    <property type="method" value="X-ray"/>
    <property type="resolution" value="1.60 A"/>
    <property type="chains" value="A/B/C/D=1-369"/>
</dbReference>
<dbReference type="PDB" id="1ZZ1">
    <property type="method" value="X-ray"/>
    <property type="resolution" value="1.57 A"/>
    <property type="chains" value="A/B/C/D=1-369"/>
</dbReference>
<dbReference type="PDB" id="1ZZ3">
    <property type="method" value="X-ray"/>
    <property type="resolution" value="1.76 A"/>
    <property type="chains" value="A/B/C/D=1-369"/>
</dbReference>
<dbReference type="PDB" id="2GH6">
    <property type="method" value="X-ray"/>
    <property type="resolution" value="2.20 A"/>
    <property type="chains" value="A/B/C/D=2-369"/>
</dbReference>
<dbReference type="PDB" id="2VCG">
    <property type="method" value="X-ray"/>
    <property type="resolution" value="1.90 A"/>
    <property type="chains" value="A/B/C/D=2-369"/>
</dbReference>
<dbReference type="PDB" id="5G17">
    <property type="method" value="X-ray"/>
    <property type="resolution" value="1.51 A"/>
    <property type="chains" value="A/B=2-369"/>
</dbReference>
<dbReference type="PDB" id="5G1A">
    <property type="method" value="X-ray"/>
    <property type="resolution" value="1.42 A"/>
    <property type="chains" value="A/B=2-369"/>
</dbReference>
<dbReference type="PDB" id="5G1B">
    <property type="method" value="X-ray"/>
    <property type="resolution" value="1.70 A"/>
    <property type="chains" value="A/B=2-369"/>
</dbReference>
<dbReference type="PDB" id="5G1C">
    <property type="method" value="X-ray"/>
    <property type="resolution" value="1.81 A"/>
    <property type="chains" value="A/B=2-369"/>
</dbReference>
<dbReference type="PDB" id="5G3W">
    <property type="method" value="X-ray"/>
    <property type="resolution" value="1.60 A"/>
    <property type="chains" value="A/B/C/D=2-369"/>
</dbReference>
<dbReference type="PDB" id="6GJK">
    <property type="method" value="X-ray"/>
    <property type="resolution" value="1.47 A"/>
    <property type="chains" value="A/B=2-369"/>
</dbReference>
<dbReference type="PDBsum" id="1ZZ0"/>
<dbReference type="PDBsum" id="1ZZ1"/>
<dbReference type="PDBsum" id="1ZZ3"/>
<dbReference type="PDBsum" id="2GH6"/>
<dbReference type="PDBsum" id="2VCG"/>
<dbReference type="PDBsum" id="5G17"/>
<dbReference type="PDBsum" id="5G1A"/>
<dbReference type="PDBsum" id="5G1B"/>
<dbReference type="PDBsum" id="5G1C"/>
<dbReference type="PDBsum" id="5G3W"/>
<dbReference type="PDBsum" id="6GJK"/>
<dbReference type="SMR" id="Q70I53"/>
<dbReference type="BindingDB" id="Q70I53"/>
<dbReference type="ChEMBL" id="CHEMBL6017"/>
<dbReference type="DrugBank" id="DB07553">
    <property type="generic name" value="9,9,9-TRIFLUORO-8-OXO-N-PHENYLNONANAMIDE"/>
</dbReference>
<dbReference type="DrugBank" id="DB08505">
    <property type="generic name" value="methyl 4-bromo-N-[8-(hydroxyamino)-8-oxooctanoyl]-L-phenylalaninate"/>
</dbReference>
<dbReference type="DrugCentral" id="Q70I53"/>
<dbReference type="BRENDA" id="3.5.1.4">
    <property type="organism ID" value="236"/>
</dbReference>
<dbReference type="BRENDA" id="3.5.1.98">
    <property type="organism ID" value="236"/>
</dbReference>
<dbReference type="EvolutionaryTrace" id="Q70I53"/>
<dbReference type="GO" id="GO:0004407">
    <property type="term" value="F:histone deacetylase activity"/>
    <property type="evidence" value="ECO:0007669"/>
    <property type="project" value="TreeGrafter"/>
</dbReference>
<dbReference type="GO" id="GO:0016787">
    <property type="term" value="F:hydrolase activity"/>
    <property type="evidence" value="ECO:0007669"/>
    <property type="project" value="UniProtKB-KW"/>
</dbReference>
<dbReference type="GO" id="GO:0046872">
    <property type="term" value="F:metal ion binding"/>
    <property type="evidence" value="ECO:0007669"/>
    <property type="project" value="UniProtKB-KW"/>
</dbReference>
<dbReference type="GO" id="GO:0040029">
    <property type="term" value="P:epigenetic regulation of gene expression"/>
    <property type="evidence" value="ECO:0007669"/>
    <property type="project" value="TreeGrafter"/>
</dbReference>
<dbReference type="CDD" id="cd09996">
    <property type="entry name" value="HDAC_classII_1"/>
    <property type="match status" value="1"/>
</dbReference>
<dbReference type="Gene3D" id="3.40.800.20">
    <property type="entry name" value="Histone deacetylase domain"/>
    <property type="match status" value="1"/>
</dbReference>
<dbReference type="InterPro" id="IPR050284">
    <property type="entry name" value="HDAC_PDAC"/>
</dbReference>
<dbReference type="InterPro" id="IPR000286">
    <property type="entry name" value="His_deacetylse"/>
</dbReference>
<dbReference type="InterPro" id="IPR023801">
    <property type="entry name" value="His_deacetylse_dom"/>
</dbReference>
<dbReference type="InterPro" id="IPR037138">
    <property type="entry name" value="His_deacetylse_dom_sf"/>
</dbReference>
<dbReference type="InterPro" id="IPR023696">
    <property type="entry name" value="Ureohydrolase_dom_sf"/>
</dbReference>
<dbReference type="PANTHER" id="PTHR10625:SF10">
    <property type="entry name" value="HISTONE DEACETYLASE HDAC1"/>
    <property type="match status" value="1"/>
</dbReference>
<dbReference type="PANTHER" id="PTHR10625">
    <property type="entry name" value="HISTONE DEACETYLASE HDAC1-RELATED"/>
    <property type="match status" value="1"/>
</dbReference>
<dbReference type="Pfam" id="PF00850">
    <property type="entry name" value="Hist_deacetyl"/>
    <property type="match status" value="1"/>
</dbReference>
<dbReference type="PRINTS" id="PR01270">
    <property type="entry name" value="HDASUPER"/>
</dbReference>
<dbReference type="SUPFAM" id="SSF52768">
    <property type="entry name" value="Arginase/deacetylase"/>
    <property type="match status" value="1"/>
</dbReference>
<comment type="function">
    <text evidence="2">Exhibits significant levels of protein deacetylase activity comparable to those of eukaryotic HDACs in assays both with fluorogenic peptidic substrates and acetate-radiolabeled histones. Accepts proteins with epsilon-acetylated lysine residues and tritiated-acetate-prelabeled chicken histones as substrates. The natural substrate protein is not yet known.</text>
</comment>
<comment type="cofactor">
    <cofactor evidence="5">
        <name>Zn(2+)</name>
        <dbReference type="ChEBI" id="CHEBI:29105"/>
    </cofactor>
    <text evidence="3">Binds 1 zinc ion per subunit.</text>
</comment>
<comment type="activity regulation">
    <text evidence="2 3">Zinc, and cobalt and nickel at a lesser extent, are able to increase the catalytic activity (2.2-, 1.3- and 1.1-fold respectively) at concentrations of 1 mM. Higher concentrations have an inhibitory effect. Magnesium, manganese and calcium have no effect on activity at concentrations between 0 and 10 mM. At 100 mM, the catalytic activity is increased between 1.2- and 2.1-fold. Hydroxamates like TSA and SAHA inhibit the enzyme (PubMed:15060035). Is also inhibited by azobenzenes, stilbenes and arylazopyrazoles (PubMed:27756124).</text>
</comment>
<comment type="biophysicochemical properties">
    <phDependence>
        <text evidence="2">Optimum pH is 8.0.</text>
    </phDependence>
</comment>
<comment type="subunit">
    <text evidence="5">Homotetramer; dimer of dimers.</text>
</comment>
<comment type="similarity">
    <text evidence="4">Belongs to the histone deacetylase family.</text>
</comment>
<protein>
    <recommendedName>
        <fullName>Histone deacetylase-like amidohydrolase</fullName>
        <shortName>HDAC-like amidohydrolase</shortName>
        <shortName>HDAH</shortName>
        <ecNumber>3.5.1.-</ecNumber>
    </recommendedName>
</protein>
<gene>
    <name type="primary">hdaH</name>
    <name type="synonym">hdaH1</name>
</gene>
<accession>Q70I53</accession>
<proteinExistence type="evidence at protein level"/>
<sequence length="369" mass="39424">MAIGYVWNTLYGWVDTGTGSLAAANLTARMQPISHHLAHPDTKRRFHELVCASGQIEHLTPIAAVAATDADILRAHSAAHLENMKRVSNLPTGGDTGDGITMMGNGGLEIARLSAGGAVELTRRVATGELSAGYALVNPPGHHAPHNAAMGFCIFNNTSVAAGYARAVLGMERVAILDWDVHHGNGTQDIWWNDPSVLTISLHQHLCFPPDSGYSTERGAGNGHGYNINVPLPPGSGNAAYLHAMDQVVLHALRAYRPQLIIVGSGFDASMLDPLARMMVTADGFRQMARRTIDCAADICDGRIVFVQEGGYSPHYLPFCGLAVIEELTGVRSLPDPYHEFLAGMGGNTLLDAERAAIEEIVPLLADIR</sequence>
<feature type="initiator methionine" description="Removed" evidence="2">
    <location>
        <position position="1"/>
    </location>
</feature>
<feature type="chain" id="PRO_0000114728" description="Histone deacetylase-like amidohydrolase">
    <location>
        <begin position="2"/>
        <end position="369"/>
    </location>
</feature>
<feature type="active site" description="Proton donor/acceptor" evidence="1">
    <location>
        <position position="143"/>
    </location>
</feature>
<feature type="binding site" evidence="3 6">
    <location>
        <position position="180"/>
    </location>
    <ligand>
        <name>Zn(2+)</name>
        <dbReference type="ChEBI" id="CHEBI:29105"/>
    </ligand>
</feature>
<feature type="binding site" evidence="3 6">
    <location>
        <position position="182"/>
    </location>
    <ligand>
        <name>Zn(2+)</name>
        <dbReference type="ChEBI" id="CHEBI:29105"/>
    </ligand>
</feature>
<feature type="binding site" evidence="3 6">
    <location>
        <position position="268"/>
    </location>
    <ligand>
        <name>Zn(2+)</name>
        <dbReference type="ChEBI" id="CHEBI:29105"/>
    </ligand>
</feature>
<feature type="site" description="Polarizes the scissile carbonyl of the substrate" evidence="1">
    <location>
        <position position="312"/>
    </location>
</feature>
<feature type="strand" evidence="8">
    <location>
        <begin position="3"/>
        <end position="6"/>
    </location>
</feature>
<feature type="helix" evidence="8">
    <location>
        <begin position="9"/>
        <end position="13"/>
    </location>
</feature>
<feature type="strand" evidence="8">
    <location>
        <begin position="18"/>
        <end position="22"/>
    </location>
</feature>
<feature type="turn" evidence="8">
    <location>
        <begin position="26"/>
        <end position="29"/>
    </location>
</feature>
<feature type="helix" evidence="8">
    <location>
        <begin position="41"/>
        <end position="52"/>
    </location>
</feature>
<feature type="helix" evidence="8">
    <location>
        <begin position="55"/>
        <end position="58"/>
    </location>
</feature>
<feature type="strand" evidence="8">
    <location>
        <begin position="59"/>
        <end position="61"/>
    </location>
</feature>
<feature type="helix" evidence="8">
    <location>
        <begin position="69"/>
        <end position="73"/>
    </location>
</feature>
<feature type="helix" evidence="8">
    <location>
        <begin position="78"/>
        <end position="89"/>
    </location>
</feature>
<feature type="strand" evidence="7">
    <location>
        <begin position="90"/>
        <end position="95"/>
    </location>
</feature>
<feature type="strand" evidence="8">
    <location>
        <begin position="97"/>
        <end position="100"/>
    </location>
</feature>
<feature type="strand" evidence="7">
    <location>
        <begin position="102"/>
        <end position="104"/>
    </location>
</feature>
<feature type="turn" evidence="8">
    <location>
        <begin position="105"/>
        <end position="107"/>
    </location>
</feature>
<feature type="helix" evidence="8">
    <location>
        <begin position="108"/>
        <end position="126"/>
    </location>
</feature>
<feature type="strand" evidence="8">
    <location>
        <begin position="131"/>
        <end position="135"/>
    </location>
</feature>
<feature type="strand" evidence="8">
    <location>
        <begin position="153"/>
        <end position="155"/>
    </location>
</feature>
<feature type="helix" evidence="8">
    <location>
        <begin position="157"/>
        <end position="167"/>
    </location>
</feature>
<feature type="strand" evidence="8">
    <location>
        <begin position="174"/>
        <end position="178"/>
    </location>
</feature>
<feature type="strand" evidence="8">
    <location>
        <begin position="180"/>
        <end position="182"/>
    </location>
</feature>
<feature type="helix" evidence="8">
    <location>
        <begin position="185"/>
        <end position="190"/>
    </location>
</feature>
<feature type="turn" evidence="8">
    <location>
        <begin position="191"/>
        <end position="193"/>
    </location>
</feature>
<feature type="strand" evidence="8">
    <location>
        <begin position="197"/>
        <end position="204"/>
    </location>
</feature>
<feature type="strand" evidence="8">
    <location>
        <begin position="207"/>
        <end position="209"/>
    </location>
</feature>
<feature type="helix" evidence="8">
    <location>
        <begin position="221"/>
        <end position="223"/>
    </location>
</feature>
<feature type="strand" evidence="8">
    <location>
        <begin position="227"/>
        <end position="232"/>
    </location>
</feature>
<feature type="helix" evidence="8">
    <location>
        <begin position="238"/>
        <end position="247"/>
    </location>
</feature>
<feature type="helix" evidence="8">
    <location>
        <begin position="249"/>
        <end position="256"/>
    </location>
</feature>
<feature type="strand" evidence="8">
    <location>
        <begin position="261"/>
        <end position="265"/>
    </location>
</feature>
<feature type="helix" evidence="8">
    <location>
        <begin position="282"/>
        <end position="299"/>
    </location>
</feature>
<feature type="strand" evidence="8">
    <location>
        <begin position="304"/>
        <end position="308"/>
    </location>
</feature>
<feature type="turn" evidence="8">
    <location>
        <begin position="314"/>
        <end position="316"/>
    </location>
</feature>
<feature type="helix" evidence="8">
    <location>
        <begin position="317"/>
        <end position="329"/>
    </location>
</feature>
<feature type="helix" evidence="8">
    <location>
        <begin position="339"/>
        <end position="343"/>
    </location>
</feature>
<feature type="helix" evidence="8">
    <location>
        <begin position="352"/>
        <end position="358"/>
    </location>
</feature>
<feature type="helix" evidence="8">
    <location>
        <begin position="362"/>
        <end position="367"/>
    </location>
</feature>
<reference key="1">
    <citation type="journal article" date="2004" name="J. Bacteriol.">
        <title>A new amidohydrolase from Bordetella or Alcaligenes strain FB188 with similarities to histone deacetylases.</title>
        <authorList>
            <person name="Hildmann C."/>
            <person name="Ninkovic M."/>
            <person name="Dietrich R."/>
            <person name="Wegener D."/>
            <person name="Riester D."/>
            <person name="Zimmermann T."/>
            <person name="Birch O.M."/>
            <person name="Bernegger C."/>
            <person name="Loidl P."/>
            <person name="Schwienhorst A."/>
        </authorList>
    </citation>
    <scope>NUCLEOTIDE SEQUENCE [GENOMIC DNA]</scope>
    <scope>PROTEIN SEQUENCE OF 2-26; 87-112 AND 304-332</scope>
    <scope>FUNCTION</scope>
    <scope>BIOPHYSICOCHEMICAL PROPERTIES</scope>
    <scope>ACTIVITY REGULATION</scope>
</reference>
<reference key="2">
    <citation type="journal article" date="2017" name="ACS Infect. Dis.">
        <title>Toward photopharmacological antimicrobial chemotherapy using photoswitchable amidohydrolase inhibitors.</title>
        <authorList>
            <person name="Weston C.E."/>
            <person name="Kramer A."/>
            <person name="Colin F."/>
            <person name="Yildiz O."/>
            <person name="Baud M.G."/>
            <person name="Meyer-Almes F.J."/>
            <person name="Fuchter M.J."/>
        </authorList>
    </citation>
    <scope>X-RAY CRYSTALLOGRAPHY (1.60 ANGSTROMS) OF 2-369 IN COMPLEXES WITH ZINC AND PHOTOSWITCHABLE PYRAZOLE INHIBITORS</scope>
    <scope>COFACTOR</scope>
    <scope>ACTIVITY REGULATION</scope>
    <scope>SUBUNIT</scope>
</reference>
<evidence type="ECO:0000250" key="1">
    <source>
        <dbReference type="UniProtKB" id="Q48935"/>
    </source>
</evidence>
<evidence type="ECO:0000269" key="2">
    <source>
    </source>
</evidence>
<evidence type="ECO:0000269" key="3">
    <source>
    </source>
</evidence>
<evidence type="ECO:0000305" key="4"/>
<evidence type="ECO:0000305" key="5">
    <source>
    </source>
</evidence>
<evidence type="ECO:0007744" key="6">
    <source>
        <dbReference type="PDB" id="5G1C"/>
    </source>
</evidence>
<evidence type="ECO:0007829" key="7">
    <source>
        <dbReference type="PDB" id="1ZZ3"/>
    </source>
</evidence>
<evidence type="ECO:0007829" key="8">
    <source>
        <dbReference type="PDB" id="5G1A"/>
    </source>
</evidence>